<accession>Q3J8H5</accession>
<sequence length="200" mass="21666">MTKLLVLYYSMYGHVETMAHAVAEGARSVEEVEVTLKRVPELMPEEIARNAGAKLAQEAPIATVDELPEYDAIIFGTPTRFGNMCAQMRNFLDQTGKHWMSGALIGKVGSVFTSTASQHGGQETTITSFHSTLLHQGMVIVGVPYSCQALLNMNEITGGSPYGASTLADADGSRQPSENELTIARFQGEHVAKFTKKVVE</sequence>
<comment type="catalytic activity">
    <reaction evidence="1">
        <text>a quinone + NADH + H(+) = a quinol + NAD(+)</text>
        <dbReference type="Rhea" id="RHEA:46160"/>
        <dbReference type="ChEBI" id="CHEBI:15378"/>
        <dbReference type="ChEBI" id="CHEBI:24646"/>
        <dbReference type="ChEBI" id="CHEBI:57540"/>
        <dbReference type="ChEBI" id="CHEBI:57945"/>
        <dbReference type="ChEBI" id="CHEBI:132124"/>
        <dbReference type="EC" id="1.6.5.2"/>
    </reaction>
</comment>
<comment type="catalytic activity">
    <reaction evidence="1">
        <text>a quinone + NADPH + H(+) = a quinol + NADP(+)</text>
        <dbReference type="Rhea" id="RHEA:46164"/>
        <dbReference type="ChEBI" id="CHEBI:15378"/>
        <dbReference type="ChEBI" id="CHEBI:24646"/>
        <dbReference type="ChEBI" id="CHEBI:57783"/>
        <dbReference type="ChEBI" id="CHEBI:58349"/>
        <dbReference type="ChEBI" id="CHEBI:132124"/>
        <dbReference type="EC" id="1.6.5.2"/>
    </reaction>
</comment>
<comment type="cofactor">
    <cofactor evidence="1">
        <name>FMN</name>
        <dbReference type="ChEBI" id="CHEBI:58210"/>
    </cofactor>
    <text evidence="1">Binds 1 FMN per monomer.</text>
</comment>
<comment type="similarity">
    <text evidence="1">Belongs to the WrbA family.</text>
</comment>
<keyword id="KW-0285">Flavoprotein</keyword>
<keyword id="KW-0288">FMN</keyword>
<keyword id="KW-0520">NAD</keyword>
<keyword id="KW-0521">NADP</keyword>
<keyword id="KW-0547">Nucleotide-binding</keyword>
<keyword id="KW-0560">Oxidoreductase</keyword>
<keyword id="KW-1185">Reference proteome</keyword>
<name>NQOR_NITOC</name>
<proteinExistence type="inferred from homology"/>
<gene>
    <name type="ordered locus">Noc_2414</name>
</gene>
<protein>
    <recommendedName>
        <fullName evidence="1">NAD(P)H dehydrogenase (quinone)</fullName>
        <ecNumber evidence="1">1.6.5.2</ecNumber>
    </recommendedName>
    <alternativeName>
        <fullName>Flavoprotein WrbA</fullName>
    </alternativeName>
    <alternativeName>
        <fullName evidence="1">NAD(P)H:quinone oxidoreductase</fullName>
        <shortName evidence="1">NQO</shortName>
    </alternativeName>
</protein>
<reference key="1">
    <citation type="journal article" date="2006" name="Appl. Environ. Microbiol.">
        <title>Complete genome sequence of the marine, chemolithoautotrophic, ammonia-oxidizing bacterium Nitrosococcus oceani ATCC 19707.</title>
        <authorList>
            <person name="Klotz M.G."/>
            <person name="Arp D.J."/>
            <person name="Chain P.S.G."/>
            <person name="El-Sheikh A.F."/>
            <person name="Hauser L.J."/>
            <person name="Hommes N.G."/>
            <person name="Larimer F.W."/>
            <person name="Malfatti S.A."/>
            <person name="Norton J.M."/>
            <person name="Poret-Peterson A.T."/>
            <person name="Vergez L.M."/>
            <person name="Ward B.B."/>
        </authorList>
    </citation>
    <scope>NUCLEOTIDE SEQUENCE [LARGE SCALE GENOMIC DNA]</scope>
    <source>
        <strain>ATCC 19707 / BCRC 17464 / JCM 30415 / NCIMB 11848 / C-107</strain>
    </source>
</reference>
<organism>
    <name type="scientific">Nitrosococcus oceani (strain ATCC 19707 / BCRC 17464 / JCM 30415 / NCIMB 11848 / C-107)</name>
    <dbReference type="NCBI Taxonomy" id="323261"/>
    <lineage>
        <taxon>Bacteria</taxon>
        <taxon>Pseudomonadati</taxon>
        <taxon>Pseudomonadota</taxon>
        <taxon>Gammaproteobacteria</taxon>
        <taxon>Chromatiales</taxon>
        <taxon>Chromatiaceae</taxon>
        <taxon>Nitrosococcus</taxon>
    </lineage>
</organism>
<evidence type="ECO:0000255" key="1">
    <source>
        <dbReference type="HAMAP-Rule" id="MF_01017"/>
    </source>
</evidence>
<feature type="chain" id="PRO_0000291021" description="NAD(P)H dehydrogenase (quinone)">
    <location>
        <begin position="1"/>
        <end position="200"/>
    </location>
</feature>
<feature type="domain" description="Flavodoxin-like" evidence="1">
    <location>
        <begin position="4"/>
        <end position="191"/>
    </location>
</feature>
<feature type="binding site" evidence="1">
    <location>
        <begin position="10"/>
        <end position="15"/>
    </location>
    <ligand>
        <name>FMN</name>
        <dbReference type="ChEBI" id="CHEBI:58210"/>
    </ligand>
</feature>
<feature type="binding site" evidence="1">
    <location>
        <position position="12"/>
    </location>
    <ligand>
        <name>NAD(+)</name>
        <dbReference type="ChEBI" id="CHEBI:57540"/>
    </ligand>
</feature>
<feature type="binding site" evidence="1">
    <location>
        <begin position="79"/>
        <end position="81"/>
    </location>
    <ligand>
        <name>FMN</name>
        <dbReference type="ChEBI" id="CHEBI:58210"/>
    </ligand>
</feature>
<feature type="binding site" evidence="1">
    <location>
        <position position="99"/>
    </location>
    <ligand>
        <name>substrate</name>
    </ligand>
</feature>
<feature type="binding site" evidence="1">
    <location>
        <begin position="114"/>
        <end position="120"/>
    </location>
    <ligand>
        <name>FMN</name>
        <dbReference type="ChEBI" id="CHEBI:58210"/>
    </ligand>
</feature>
<feature type="binding site" evidence="1">
    <location>
        <position position="135"/>
    </location>
    <ligand>
        <name>FMN</name>
        <dbReference type="ChEBI" id="CHEBI:58210"/>
    </ligand>
</feature>
<dbReference type="EC" id="1.6.5.2" evidence="1"/>
<dbReference type="EMBL" id="CP000127">
    <property type="protein sequence ID" value="ABA58871.1"/>
    <property type="molecule type" value="Genomic_DNA"/>
</dbReference>
<dbReference type="SMR" id="Q3J8H5"/>
<dbReference type="FunCoup" id="Q3J8H5">
    <property type="interactions" value="310"/>
</dbReference>
<dbReference type="STRING" id="323261.Noc_2414"/>
<dbReference type="KEGG" id="noc:Noc_2414"/>
<dbReference type="eggNOG" id="COG0655">
    <property type="taxonomic scope" value="Bacteria"/>
</dbReference>
<dbReference type="HOGENOM" id="CLU_051402_0_2_6"/>
<dbReference type="InParanoid" id="Q3J8H5"/>
<dbReference type="Proteomes" id="UP000006838">
    <property type="component" value="Chromosome"/>
</dbReference>
<dbReference type="GO" id="GO:0016020">
    <property type="term" value="C:membrane"/>
    <property type="evidence" value="ECO:0007669"/>
    <property type="project" value="TreeGrafter"/>
</dbReference>
<dbReference type="GO" id="GO:0050660">
    <property type="term" value="F:flavin adenine dinucleotide binding"/>
    <property type="evidence" value="ECO:0007669"/>
    <property type="project" value="UniProtKB-UniRule"/>
</dbReference>
<dbReference type="GO" id="GO:0010181">
    <property type="term" value="F:FMN binding"/>
    <property type="evidence" value="ECO:0007669"/>
    <property type="project" value="InterPro"/>
</dbReference>
<dbReference type="GO" id="GO:0051287">
    <property type="term" value="F:NAD binding"/>
    <property type="evidence" value="ECO:0007669"/>
    <property type="project" value="UniProtKB-UniRule"/>
</dbReference>
<dbReference type="GO" id="GO:0050136">
    <property type="term" value="F:NADH:ubiquinone reductase (non-electrogenic) activity"/>
    <property type="evidence" value="ECO:0007669"/>
    <property type="project" value="RHEA"/>
</dbReference>
<dbReference type="GO" id="GO:0050661">
    <property type="term" value="F:NADP binding"/>
    <property type="evidence" value="ECO:0007669"/>
    <property type="project" value="UniProtKB-UniRule"/>
</dbReference>
<dbReference type="GO" id="GO:0008753">
    <property type="term" value="F:NADPH dehydrogenase (quinone) activity"/>
    <property type="evidence" value="ECO:0007669"/>
    <property type="project" value="RHEA"/>
</dbReference>
<dbReference type="FunFam" id="3.40.50.360:FF:000001">
    <property type="entry name" value="NAD(P)H dehydrogenase (Quinone) FQR1-like"/>
    <property type="match status" value="1"/>
</dbReference>
<dbReference type="Gene3D" id="3.40.50.360">
    <property type="match status" value="1"/>
</dbReference>
<dbReference type="HAMAP" id="MF_01017">
    <property type="entry name" value="NQOR"/>
    <property type="match status" value="1"/>
</dbReference>
<dbReference type="InterPro" id="IPR008254">
    <property type="entry name" value="Flavodoxin/NO_synth"/>
</dbReference>
<dbReference type="InterPro" id="IPR029039">
    <property type="entry name" value="Flavoprotein-like_sf"/>
</dbReference>
<dbReference type="InterPro" id="IPR010089">
    <property type="entry name" value="Flavoprotein_WrbA-like"/>
</dbReference>
<dbReference type="InterPro" id="IPR005025">
    <property type="entry name" value="FMN_Rdtase-like_dom"/>
</dbReference>
<dbReference type="InterPro" id="IPR037513">
    <property type="entry name" value="NQO"/>
</dbReference>
<dbReference type="NCBIfam" id="TIGR01755">
    <property type="entry name" value="flav_wrbA"/>
    <property type="match status" value="1"/>
</dbReference>
<dbReference type="NCBIfam" id="NF002999">
    <property type="entry name" value="PRK03767.1"/>
    <property type="match status" value="1"/>
</dbReference>
<dbReference type="PANTHER" id="PTHR30546">
    <property type="entry name" value="FLAVODOXIN-RELATED PROTEIN WRBA-RELATED"/>
    <property type="match status" value="1"/>
</dbReference>
<dbReference type="PANTHER" id="PTHR30546:SF23">
    <property type="entry name" value="FLAVOPROTEIN-LIKE PROTEIN YCP4-RELATED"/>
    <property type="match status" value="1"/>
</dbReference>
<dbReference type="Pfam" id="PF03358">
    <property type="entry name" value="FMN_red"/>
    <property type="match status" value="1"/>
</dbReference>
<dbReference type="SUPFAM" id="SSF52218">
    <property type="entry name" value="Flavoproteins"/>
    <property type="match status" value="1"/>
</dbReference>
<dbReference type="PROSITE" id="PS50902">
    <property type="entry name" value="FLAVODOXIN_LIKE"/>
    <property type="match status" value="1"/>
</dbReference>